<protein>
    <recommendedName>
        <fullName>Probable DNA-directed RNA polymerase catalytic subunit</fullName>
        <ecNumber>2.7.7.6</ecNumber>
    </recommendedName>
    <alternativeName>
        <fullName>Late expression factor 8</fullName>
    </alternativeName>
</protein>
<sequence>MTDVVQDFNELYDRIENKYKLKYTFDCATNSNERMLFCAIQERKSYLCCALNEQLSCVMHKCVPVIFGTRLDKQFRETDDVDANNNINGTFMLDGRFLSFPNIMMNNNVLVHNFYDKLYAKHCKRMFLYGNVDQEKHINRAIQLVYDKQDDVLFARDVYASDYVVTEDLNSVLETYLANSGKWKPLDFLFEYNTLHKQQLVEHIKIIMNHDINYSIDSLANKIVYKHAYLIELLLTSTILQNYQRVLDKTADDDAYTVANKRRKIQSVLYNKESKKIVDCIVNGRLIYCVSKTFSKQRKVFPNQQDNSSNNNIEISLPVLKYRVGNEVARITNDSMRQKMLKQKKDFVKFIGSFFHGEMTVAGKKFFLCRNACLPNVDYEMVAQKFQYLLKHNLVAFVDDLNDVQDDSLLIAFNDRPTNLKCLKSNTSFIVYTMKRNMAPIELKITDRILYVNHHEGMICIKKKLRVNNEADINVLLTPYEYHYKHSIYYNPIIQCTIVENDDVKSLMSKLEQYYYRNFIHLFHTTPVPKLIVSLTNLKNAMPVFEYKEENCVSGLPNGYSVAVNKSILLNNKMFKLWTLVRDNKLMTAEDPYIPHIALPICLYNNKVNKLKGKLVVGPKQSCLVKFTNSSDKNYVALDDGLVLYMAGVLVSNAKINWVYDGRRYKIETCTNGNFNVYKVYVYFRQIKNQKIEKLDASMVVNGDNVMLKIVIVTSTNDLEGIKICGIHGQKGVFNRSEDLTEWMAEDGTHAQICLSPVSFLSRQSNFDKIERKYVVRGGNHDDPHAKRYPIFNIPYMLFNNTPDNIFKEFIKTSHTGHEKVEGTRFDQWTKNQSFVGNRMSESLHWMRGGSNLPQNCGEFNVVSSLLMCNNTIMKN</sequence>
<keyword id="KW-0240">DNA-directed RNA polymerase</keyword>
<keyword id="KW-0548">Nucleotidyltransferase</keyword>
<keyword id="KW-1185">Reference proteome</keyword>
<keyword id="KW-0804">Transcription</keyword>
<keyword id="KW-0805">Transcription regulation</keyword>
<keyword id="KW-0808">Transferase</keyword>
<organism>
    <name type="scientific">Autographa californica nuclear polyhedrosis virus</name>
    <name type="common">AcMNPV</name>
    <dbReference type="NCBI Taxonomy" id="46015"/>
    <lineage>
        <taxon>Viruses</taxon>
        <taxon>Viruses incertae sedis</taxon>
        <taxon>Naldaviricetes</taxon>
        <taxon>Lefavirales</taxon>
        <taxon>Baculoviridae</taxon>
        <taxon>Alphabaculovirus</taxon>
        <taxon>Alphabaculovirus aucalifornicae</taxon>
    </lineage>
</organism>
<feature type="chain" id="PRO_0000048053" description="Probable DNA-directed RNA polymerase catalytic subunit">
    <location>
        <begin position="1"/>
        <end position="876"/>
    </location>
</feature>
<evidence type="ECO:0000269" key="1">
    <source>
    </source>
</evidence>
<evidence type="ECO:0000305" key="2"/>
<proteinExistence type="evidence at protein level"/>
<organismHost>
    <name type="scientific">Lepidoptera</name>
    <name type="common">butterflies and moths</name>
    <dbReference type="NCBI Taxonomy" id="7088"/>
</organismHost>
<name>LEF8_NPVAC</name>
<comment type="function">
    <text evidence="1">Component of the viral DNA-dependent RNA polymerase which is composed of four equimolar subunits of LEF-4, LEF-8, LEF-9, and p47. Plays an essential role in late and very late gene expression.</text>
</comment>
<comment type="catalytic activity">
    <reaction>
        <text>RNA(n) + a ribonucleoside 5'-triphosphate = RNA(n+1) + diphosphate</text>
        <dbReference type="Rhea" id="RHEA:21248"/>
        <dbReference type="Rhea" id="RHEA-COMP:14527"/>
        <dbReference type="Rhea" id="RHEA-COMP:17342"/>
        <dbReference type="ChEBI" id="CHEBI:33019"/>
        <dbReference type="ChEBI" id="CHEBI:61557"/>
        <dbReference type="ChEBI" id="CHEBI:140395"/>
        <dbReference type="EC" id="2.7.7.6"/>
    </reaction>
</comment>
<comment type="subunit">
    <text evidence="1">Interacts with LEF-4, LEF-9, and p47.</text>
</comment>
<comment type="similarity">
    <text evidence="2">Belongs to the RNA polymerase beta chain family.</text>
</comment>
<reference key="1">
    <citation type="journal article" date="1994" name="J. Virol.">
        <title>A baculovirus gene involved in late gene expression predicts a large polypeptide with a conserved motif of RNA polymerases.</title>
        <authorList>
            <person name="Passarelli A.L."/>
            <person name="Todd J.W."/>
            <person name="Miller L.K."/>
        </authorList>
    </citation>
    <scope>NUCLEOTIDE SEQUENCE [GENOMIC DNA]</scope>
    <scope>FUNCTION</scope>
    <source>
        <strain>L1</strain>
    </source>
</reference>
<reference key="2">
    <citation type="journal article" date="1994" name="Virology">
        <title>The complete DNA sequence of Autographa californica nuclear polyhedrosis virus.</title>
        <authorList>
            <person name="Ayres M.D."/>
            <person name="Howard S.C."/>
            <person name="Kuzio J."/>
            <person name="Lopez-Ferber M."/>
            <person name="Possee R.D."/>
        </authorList>
    </citation>
    <scope>NUCLEOTIDE SEQUENCE [LARGE SCALE GENOMIC DNA]</scope>
    <source>
        <strain>C6</strain>
    </source>
</reference>
<reference key="3">
    <citation type="journal article" date="1998" name="J. Virol.">
        <title>A virus-encoded RNA polymerase purified from baculovirus-infected cells.</title>
        <authorList>
            <person name="Guarino L.A."/>
            <person name="Xu B."/>
            <person name="Jin J."/>
            <person name="Dong W."/>
        </authorList>
    </citation>
    <scope>INTERACTION WITH LEF-4; LEF-9 AND P47</scope>
    <scope>FUNCTION</scope>
</reference>
<gene>
    <name type="primary">LEF-8</name>
</gene>
<dbReference type="EC" id="2.7.7.6"/>
<dbReference type="EMBL" id="L22858">
    <property type="protein sequence ID" value="AAA66680.1"/>
    <property type="molecule type" value="Genomic_DNA"/>
</dbReference>
<dbReference type="EMBL" id="U04879">
    <property type="protein sequence ID" value="AAA20054.1"/>
    <property type="molecule type" value="Genomic_DNA"/>
</dbReference>
<dbReference type="PIR" id="B72856">
    <property type="entry name" value="B72856"/>
</dbReference>
<dbReference type="KEGG" id="vg:1403882"/>
<dbReference type="OrthoDB" id="898at10239"/>
<dbReference type="Proteomes" id="UP000008292">
    <property type="component" value="Segment"/>
</dbReference>
<dbReference type="GO" id="GO:0000428">
    <property type="term" value="C:DNA-directed RNA polymerase complex"/>
    <property type="evidence" value="ECO:0007669"/>
    <property type="project" value="UniProtKB-KW"/>
</dbReference>
<dbReference type="GO" id="GO:0003677">
    <property type="term" value="F:DNA binding"/>
    <property type="evidence" value="ECO:0007669"/>
    <property type="project" value="InterPro"/>
</dbReference>
<dbReference type="GO" id="GO:0003899">
    <property type="term" value="F:DNA-directed RNA polymerase activity"/>
    <property type="evidence" value="ECO:0007669"/>
    <property type="project" value="UniProtKB-EC"/>
</dbReference>
<dbReference type="GO" id="GO:0006351">
    <property type="term" value="P:DNA-templated transcription"/>
    <property type="evidence" value="ECO:0007669"/>
    <property type="project" value="InterPro"/>
</dbReference>
<dbReference type="GO" id="GO:0039695">
    <property type="term" value="P:DNA-templated viral transcription"/>
    <property type="evidence" value="ECO:0000314"/>
    <property type="project" value="UniProtKB"/>
</dbReference>
<dbReference type="Gene3D" id="2.40.270.10">
    <property type="entry name" value="DNA-directed RNA polymerase, subunit 2, domain 6"/>
    <property type="match status" value="1"/>
</dbReference>
<dbReference type="InterPro" id="IPR037033">
    <property type="entry name" value="DNA-dir_RNAP_su2_hyb_sf"/>
</dbReference>
<dbReference type="InterPro" id="IPR007025">
    <property type="entry name" value="LEF-8"/>
</dbReference>
<dbReference type="InterPro" id="IPR007121">
    <property type="entry name" value="RNA_pol_bsu_CS"/>
</dbReference>
<dbReference type="Pfam" id="PF04941">
    <property type="entry name" value="LEF-8"/>
    <property type="match status" value="1"/>
</dbReference>
<dbReference type="PROSITE" id="PS01166">
    <property type="entry name" value="RNA_POL_BETA"/>
    <property type="match status" value="1"/>
</dbReference>
<accession>P41452</accession>